<dbReference type="EMBL" id="L43967">
    <property type="protein sequence ID" value="AAC71527.1"/>
    <property type="molecule type" value="Genomic_DNA"/>
</dbReference>
<dbReference type="EMBL" id="U02204">
    <property type="protein sequence ID" value="AAD12493.1"/>
    <property type="molecule type" value="Genomic_DNA"/>
</dbReference>
<dbReference type="PIR" id="G64233">
    <property type="entry name" value="G64233"/>
</dbReference>
<dbReference type="RefSeq" id="WP_009885883.1">
    <property type="nucleotide sequence ID" value="NC_000908.2"/>
</dbReference>
<dbReference type="PDB" id="5OBU">
    <property type="method" value="X-ray"/>
    <property type="resolution" value="2.00 A"/>
    <property type="chains" value="A=1-521"/>
</dbReference>
<dbReference type="PDB" id="5OBV">
    <property type="method" value="X-ray"/>
    <property type="resolution" value="2.49 A"/>
    <property type="chains" value="A=1-521"/>
</dbReference>
<dbReference type="PDB" id="5OBW">
    <property type="method" value="X-ray"/>
    <property type="resolution" value="1.40 A"/>
    <property type="chains" value="A=1-366"/>
</dbReference>
<dbReference type="PDB" id="5OBX">
    <property type="method" value="X-ray"/>
    <property type="resolution" value="1.78 A"/>
    <property type="chains" value="A=1-366"/>
</dbReference>
<dbReference type="PDB" id="5OBY">
    <property type="method" value="X-ray"/>
    <property type="resolution" value="1.30 A"/>
    <property type="chains" value="A=1-366"/>
</dbReference>
<dbReference type="PDBsum" id="5OBU"/>
<dbReference type="PDBsum" id="5OBV"/>
<dbReference type="PDBsum" id="5OBW"/>
<dbReference type="PDBsum" id="5OBX"/>
<dbReference type="PDBsum" id="5OBY"/>
<dbReference type="SMR" id="P47547"/>
<dbReference type="FunCoup" id="P47547">
    <property type="interactions" value="200"/>
</dbReference>
<dbReference type="STRING" id="243273.MG_305"/>
<dbReference type="GeneID" id="88282468"/>
<dbReference type="KEGG" id="mge:MG_305"/>
<dbReference type="eggNOG" id="COG0443">
    <property type="taxonomic scope" value="Bacteria"/>
</dbReference>
<dbReference type="HOGENOM" id="CLU_005965_2_1_14"/>
<dbReference type="InParanoid" id="P47547"/>
<dbReference type="OrthoDB" id="9766019at2"/>
<dbReference type="BioCyc" id="MGEN243273:G1GJ2-374-MONOMER"/>
<dbReference type="Proteomes" id="UP000000807">
    <property type="component" value="Chromosome"/>
</dbReference>
<dbReference type="GO" id="GO:0005524">
    <property type="term" value="F:ATP binding"/>
    <property type="evidence" value="ECO:0007669"/>
    <property type="project" value="UniProtKB-UniRule"/>
</dbReference>
<dbReference type="GO" id="GO:0016887">
    <property type="term" value="F:ATP hydrolysis activity"/>
    <property type="evidence" value="ECO:0000318"/>
    <property type="project" value="GO_Central"/>
</dbReference>
<dbReference type="GO" id="GO:0140662">
    <property type="term" value="F:ATP-dependent protein folding chaperone"/>
    <property type="evidence" value="ECO:0007669"/>
    <property type="project" value="InterPro"/>
</dbReference>
<dbReference type="GO" id="GO:0031072">
    <property type="term" value="F:heat shock protein binding"/>
    <property type="evidence" value="ECO:0000318"/>
    <property type="project" value="GO_Central"/>
</dbReference>
<dbReference type="GO" id="GO:0044183">
    <property type="term" value="F:protein folding chaperone"/>
    <property type="evidence" value="ECO:0000318"/>
    <property type="project" value="GO_Central"/>
</dbReference>
<dbReference type="GO" id="GO:0051082">
    <property type="term" value="F:unfolded protein binding"/>
    <property type="evidence" value="ECO:0007669"/>
    <property type="project" value="InterPro"/>
</dbReference>
<dbReference type="GO" id="GO:0051085">
    <property type="term" value="P:chaperone cofactor-dependent protein refolding"/>
    <property type="evidence" value="ECO:0000318"/>
    <property type="project" value="GO_Central"/>
</dbReference>
<dbReference type="GO" id="GO:0042026">
    <property type="term" value="P:protein refolding"/>
    <property type="evidence" value="ECO:0000318"/>
    <property type="project" value="GO_Central"/>
</dbReference>
<dbReference type="CDD" id="cd10234">
    <property type="entry name" value="ASKHA_NBD_HSP70_DnaK-like"/>
    <property type="match status" value="1"/>
</dbReference>
<dbReference type="FunFam" id="2.60.34.10:FF:000014">
    <property type="entry name" value="Chaperone protein DnaK HSP70"/>
    <property type="match status" value="1"/>
</dbReference>
<dbReference type="FunFam" id="3.30.420.40:FF:000004">
    <property type="entry name" value="Molecular chaperone DnaK"/>
    <property type="match status" value="1"/>
</dbReference>
<dbReference type="FunFam" id="3.90.640.10:FF:000003">
    <property type="entry name" value="Molecular chaperone DnaK"/>
    <property type="match status" value="1"/>
</dbReference>
<dbReference type="Gene3D" id="3.30.420.40">
    <property type="match status" value="2"/>
</dbReference>
<dbReference type="Gene3D" id="3.90.640.10">
    <property type="entry name" value="Actin, Chain A, domain 4"/>
    <property type="match status" value="1"/>
</dbReference>
<dbReference type="Gene3D" id="2.60.34.10">
    <property type="entry name" value="Substrate Binding Domain Of DNAk, Chain A, domain 1"/>
    <property type="match status" value="1"/>
</dbReference>
<dbReference type="HAMAP" id="MF_00332">
    <property type="entry name" value="DnaK"/>
    <property type="match status" value="1"/>
</dbReference>
<dbReference type="InterPro" id="IPR043129">
    <property type="entry name" value="ATPase_NBD"/>
</dbReference>
<dbReference type="InterPro" id="IPR012725">
    <property type="entry name" value="Chaperone_DnaK"/>
</dbReference>
<dbReference type="InterPro" id="IPR018181">
    <property type="entry name" value="Heat_shock_70_CS"/>
</dbReference>
<dbReference type="InterPro" id="IPR029047">
    <property type="entry name" value="HSP70_peptide-bd_sf"/>
</dbReference>
<dbReference type="InterPro" id="IPR013126">
    <property type="entry name" value="Hsp_70_fam"/>
</dbReference>
<dbReference type="NCBIfam" id="NF001413">
    <property type="entry name" value="PRK00290.1"/>
    <property type="match status" value="1"/>
</dbReference>
<dbReference type="NCBIfam" id="TIGR02350">
    <property type="entry name" value="prok_dnaK"/>
    <property type="match status" value="1"/>
</dbReference>
<dbReference type="PANTHER" id="PTHR19375">
    <property type="entry name" value="HEAT SHOCK PROTEIN 70KDA"/>
    <property type="match status" value="1"/>
</dbReference>
<dbReference type="Pfam" id="PF00012">
    <property type="entry name" value="HSP70"/>
    <property type="match status" value="1"/>
</dbReference>
<dbReference type="PRINTS" id="PR00301">
    <property type="entry name" value="HEATSHOCK70"/>
</dbReference>
<dbReference type="SUPFAM" id="SSF53067">
    <property type="entry name" value="Actin-like ATPase domain"/>
    <property type="match status" value="2"/>
</dbReference>
<dbReference type="SUPFAM" id="SSF100920">
    <property type="entry name" value="Heat shock protein 70kD (HSP70), peptide-binding domain"/>
    <property type="match status" value="1"/>
</dbReference>
<dbReference type="PROSITE" id="PS00297">
    <property type="entry name" value="HSP70_1"/>
    <property type="match status" value="1"/>
</dbReference>
<dbReference type="PROSITE" id="PS00329">
    <property type="entry name" value="HSP70_2"/>
    <property type="match status" value="1"/>
</dbReference>
<dbReference type="PROSITE" id="PS01036">
    <property type="entry name" value="HSP70_3"/>
    <property type="match status" value="1"/>
</dbReference>
<name>DNAK_MYCGE</name>
<keyword id="KW-0002">3D-structure</keyword>
<keyword id="KW-0067">ATP-binding</keyword>
<keyword id="KW-0143">Chaperone</keyword>
<keyword id="KW-0547">Nucleotide-binding</keyword>
<keyword id="KW-0597">Phosphoprotein</keyword>
<keyword id="KW-1185">Reference proteome</keyword>
<keyword id="KW-0346">Stress response</keyword>
<feature type="chain" id="PRO_0000078490" description="Chaperone protein DnaK">
    <location>
        <begin position="1"/>
        <end position="595"/>
    </location>
</feature>
<feature type="modified residue" description="Phosphothreonine; by autocatalysis" evidence="1">
    <location>
        <position position="182"/>
    </location>
</feature>
<feature type="sequence conflict" description="In Ref. 2." evidence="2" ref="2">
    <original>PKGKPQIEITFSLD</original>
    <variation>LKVNPKLRLPLVWM</variation>
    <location>
        <begin position="447"/>
        <end position="460"/>
    </location>
</feature>
<feature type="strand" evidence="5">
    <location>
        <begin position="9"/>
        <end position="13"/>
    </location>
</feature>
<feature type="strand" evidence="5">
    <location>
        <begin position="15"/>
        <end position="24"/>
    </location>
</feature>
<feature type="strand" evidence="5">
    <location>
        <begin position="27"/>
        <end position="30"/>
    </location>
</feature>
<feature type="strand" evidence="5">
    <location>
        <begin position="38"/>
        <end position="42"/>
    </location>
</feature>
<feature type="strand" evidence="5">
    <location>
        <begin position="44"/>
        <end position="47"/>
    </location>
</feature>
<feature type="strand" evidence="5">
    <location>
        <begin position="50"/>
        <end position="54"/>
    </location>
</feature>
<feature type="helix" evidence="5">
    <location>
        <begin position="55"/>
        <end position="58"/>
    </location>
</feature>
<feature type="turn" evidence="5">
    <location>
        <begin position="59"/>
        <end position="63"/>
    </location>
</feature>
<feature type="strand" evidence="4">
    <location>
        <begin position="67"/>
        <end position="69"/>
    </location>
</feature>
<feature type="helix" evidence="5">
    <location>
        <begin position="71"/>
        <end position="74"/>
    </location>
</feature>
<feature type="strand" evidence="5">
    <location>
        <begin position="81"/>
        <end position="84"/>
    </location>
</feature>
<feature type="strand" evidence="5">
    <location>
        <begin position="90"/>
        <end position="93"/>
    </location>
</feature>
<feature type="helix" evidence="5">
    <location>
        <begin position="95"/>
        <end position="114"/>
    </location>
</feature>
<feature type="strand" evidence="5">
    <location>
        <begin position="120"/>
        <end position="125"/>
    </location>
</feature>
<feature type="helix" evidence="5">
    <location>
        <begin position="131"/>
        <end position="143"/>
    </location>
</feature>
<feature type="strand" evidence="5">
    <location>
        <begin position="147"/>
        <end position="153"/>
    </location>
</feature>
<feature type="helix" evidence="5">
    <location>
        <begin position="154"/>
        <end position="161"/>
    </location>
</feature>
<feature type="helix" evidence="5">
    <location>
        <begin position="164"/>
        <end position="166"/>
    </location>
</feature>
<feature type="strand" evidence="3">
    <location>
        <begin position="167"/>
        <end position="169"/>
    </location>
</feature>
<feature type="strand" evidence="5">
    <location>
        <begin position="171"/>
        <end position="178"/>
    </location>
</feature>
<feature type="strand" evidence="5">
    <location>
        <begin position="183"/>
        <end position="191"/>
    </location>
</feature>
<feature type="strand" evidence="5">
    <location>
        <begin position="194"/>
        <end position="203"/>
    </location>
</feature>
<feature type="helix" evidence="5">
    <location>
        <begin position="208"/>
        <end position="226"/>
    </location>
</feature>
<feature type="turn" evidence="4">
    <location>
        <begin position="227"/>
        <end position="229"/>
    </location>
</feature>
<feature type="helix" evidence="5">
    <location>
        <begin position="232"/>
        <end position="234"/>
    </location>
</feature>
<feature type="helix" evidence="5">
    <location>
        <begin position="236"/>
        <end position="255"/>
    </location>
</feature>
<feature type="strand" evidence="5">
    <location>
        <begin position="256"/>
        <end position="269"/>
    </location>
</feature>
<feature type="strand" evidence="5">
    <location>
        <begin position="272"/>
        <end position="281"/>
    </location>
</feature>
<feature type="helix" evidence="5">
    <location>
        <begin position="282"/>
        <end position="288"/>
    </location>
</feature>
<feature type="helix" evidence="5">
    <location>
        <begin position="290"/>
        <end position="295"/>
    </location>
</feature>
<feature type="helix" evidence="5">
    <location>
        <begin position="297"/>
        <end position="307"/>
    </location>
</feature>
<feature type="helix" evidence="5">
    <location>
        <begin position="311"/>
        <end position="313"/>
    </location>
</feature>
<feature type="strand" evidence="5">
    <location>
        <begin position="316"/>
        <end position="321"/>
    </location>
</feature>
<feature type="helix" evidence="5">
    <location>
        <begin position="322"/>
        <end position="325"/>
    </location>
</feature>
<feature type="helix" evidence="5">
    <location>
        <begin position="327"/>
        <end position="336"/>
    </location>
</feature>
<feature type="turn" evidence="5">
    <location>
        <begin position="348"/>
        <end position="350"/>
    </location>
</feature>
<feature type="helix" evidence="5">
    <location>
        <begin position="351"/>
        <end position="364"/>
    </location>
</feature>
<feature type="strand" evidence="3">
    <location>
        <begin position="380"/>
        <end position="384"/>
    </location>
</feature>
<feature type="turn" evidence="3">
    <location>
        <begin position="385"/>
        <end position="387"/>
    </location>
</feature>
<feature type="strand" evidence="3">
    <location>
        <begin position="388"/>
        <end position="393"/>
    </location>
</feature>
<feature type="strand" evidence="3">
    <location>
        <begin position="398"/>
        <end position="411"/>
    </location>
</feature>
<feature type="strand" evidence="3">
    <location>
        <begin position="417"/>
        <end position="425"/>
    </location>
</feature>
<feature type="helix" evidence="3">
    <location>
        <begin position="429"/>
        <end position="431"/>
    </location>
</feature>
<feature type="strand" evidence="3">
    <location>
        <begin position="432"/>
        <end position="440"/>
    </location>
</feature>
<feature type="strand" evidence="3">
    <location>
        <begin position="453"/>
        <end position="459"/>
    </location>
</feature>
<feature type="strand" evidence="3">
    <location>
        <begin position="465"/>
        <end position="471"/>
    </location>
</feature>
<feature type="turn" evidence="3">
    <location>
        <begin position="472"/>
        <end position="474"/>
    </location>
</feature>
<feature type="strand" evidence="3">
    <location>
        <begin position="477"/>
        <end position="482"/>
    </location>
</feature>
<feature type="helix" evidence="3">
    <location>
        <begin position="490"/>
        <end position="502"/>
    </location>
</feature>
<feature type="helix" evidence="3">
    <location>
        <begin position="504"/>
        <end position="511"/>
    </location>
</feature>
<proteinExistence type="evidence at protein level"/>
<accession>P47547</accession>
<accession>Q49321</accession>
<gene>
    <name type="primary">dnaK</name>
    <name type="synonym">hsp70</name>
    <name type="ordered locus">MG305</name>
</gene>
<organism>
    <name type="scientific">Mycoplasma genitalium (strain ATCC 33530 / DSM 19775 / NCTC 10195 / G37)</name>
    <name type="common">Mycoplasmoides genitalium</name>
    <dbReference type="NCBI Taxonomy" id="243273"/>
    <lineage>
        <taxon>Bacteria</taxon>
        <taxon>Bacillati</taxon>
        <taxon>Mycoplasmatota</taxon>
        <taxon>Mycoplasmoidales</taxon>
        <taxon>Mycoplasmoidaceae</taxon>
        <taxon>Mycoplasmoides</taxon>
    </lineage>
</organism>
<sequence length="595" mass="65051">MSADNGLIIGIDLGTTNSCVSVMEGGRPVVLENPEGKRTTPSIVSYKNNEIIVGDAAKRQMVTNPNTIVSIKRLMGTSNKVKVQNADGTTKELSPEQVSAQILSYLKDFAEKKIGKKISRAVITVPAYFNDAERNATKTAGKIAGLNVERIINEPTAAALAYGIDKASREMKVLVYDLGGGTFDVSLLDIAEGTFEVLATAGDNRLGGDDWDNKIIEYISAYIAKEHQGLNLSKDKMAMQRLKEAAERAKIELSAQLETIISLPFLTVTQKGPVNVELKLTRAKFEELTKPLLERTRNPISDVIKEAKIKPEEINEILLVGGSTRMPAVQKLVESMVPGKKPNRSINPDEVVAIGAAIQGGVLRGDVKDVLLLDVTPLTLSIETLGGVATPLIKRNTTIPVSKSQIFSTAQDNQESVDVVVCQGERPMSRDNKSLGRFNLGGIQPAPKGKPQIEITFSLDANGILNVKAKDLTTQKENSITISDNGNLSEEEIQKMIRDAEANKERDNIIRERIELRNEGEGIVNTIKEILASPDAKNFPKEEKEKLEKLTGNIDAAIKANDYAKLKVEIENFKKWREEMAKKYNPTGEQGPQAK</sequence>
<protein>
    <recommendedName>
        <fullName>Chaperone protein DnaK</fullName>
    </recommendedName>
    <alternativeName>
        <fullName>HSP70</fullName>
    </alternativeName>
    <alternativeName>
        <fullName>Heat shock 70 kDa protein</fullName>
    </alternativeName>
    <alternativeName>
        <fullName>Heat shock protein 70</fullName>
    </alternativeName>
</protein>
<comment type="function">
    <text evidence="1">Acts as a chaperone.</text>
</comment>
<comment type="induction">
    <text evidence="1">By stress conditions e.g. heat shock (By similarity).</text>
</comment>
<comment type="similarity">
    <text evidence="2">Belongs to the heat shock protein 70 family.</text>
</comment>
<evidence type="ECO:0000250" key="1"/>
<evidence type="ECO:0000305" key="2"/>
<evidence type="ECO:0007829" key="3">
    <source>
        <dbReference type="PDB" id="5OBU"/>
    </source>
</evidence>
<evidence type="ECO:0007829" key="4">
    <source>
        <dbReference type="PDB" id="5OBX"/>
    </source>
</evidence>
<evidence type="ECO:0007829" key="5">
    <source>
        <dbReference type="PDB" id="5OBY"/>
    </source>
</evidence>
<reference key="1">
    <citation type="journal article" date="1995" name="Science">
        <title>The minimal gene complement of Mycoplasma genitalium.</title>
        <authorList>
            <person name="Fraser C.M."/>
            <person name="Gocayne J.D."/>
            <person name="White O."/>
            <person name="Adams M.D."/>
            <person name="Clayton R.A."/>
            <person name="Fleischmann R.D."/>
            <person name="Bult C.J."/>
            <person name="Kerlavage A.R."/>
            <person name="Sutton G.G."/>
            <person name="Kelley J.M."/>
            <person name="Fritchman J.L."/>
            <person name="Weidman J.F."/>
            <person name="Small K.V."/>
            <person name="Sandusky M."/>
            <person name="Fuhrmann J.L."/>
            <person name="Nguyen D.T."/>
            <person name="Utterback T.R."/>
            <person name="Saudek D.M."/>
            <person name="Phillips C.A."/>
            <person name="Merrick J.M."/>
            <person name="Tomb J.-F."/>
            <person name="Dougherty B.A."/>
            <person name="Bott K.F."/>
            <person name="Hu P.-C."/>
            <person name="Lucier T.S."/>
            <person name="Peterson S.N."/>
            <person name="Smith H.O."/>
            <person name="Hutchison C.A. III"/>
            <person name="Venter J.C."/>
        </authorList>
    </citation>
    <scope>NUCLEOTIDE SEQUENCE [LARGE SCALE GENOMIC DNA]</scope>
    <source>
        <strain>ATCC 33530 / DSM 19775 / NCTC 10195 / G37</strain>
    </source>
</reference>
<reference key="2">
    <citation type="journal article" date="1993" name="J. Bacteriol.">
        <title>A survey of the Mycoplasma genitalium genome by using random sequencing.</title>
        <authorList>
            <person name="Peterson S.N."/>
            <person name="Hu P.-C."/>
            <person name="Bott K.F."/>
            <person name="Hutchison C.A. III"/>
        </authorList>
    </citation>
    <scope>NUCLEOTIDE SEQUENCE [GENOMIC DNA] OF 353-460</scope>
    <source>
        <strain>ATCC 33530 / DSM 19775 / NCTC 10195 / G37</strain>
    </source>
</reference>